<keyword id="KW-0025">Alternative splicing</keyword>
<keyword id="KW-1003">Cell membrane</keyword>
<keyword id="KW-1015">Disulfide bond</keyword>
<keyword id="KW-0325">Glycoprotein</keyword>
<keyword id="KW-0336">GPI-anchor</keyword>
<keyword id="KW-0378">Hydrolase</keyword>
<keyword id="KW-0449">Lipoprotein</keyword>
<keyword id="KW-0460">Magnesium</keyword>
<keyword id="KW-0472">Membrane</keyword>
<keyword id="KW-0479">Metal-binding</keyword>
<keyword id="KW-0597">Phosphoprotein</keyword>
<keyword id="KW-1185">Reference proteome</keyword>
<keyword id="KW-0732">Signal</keyword>
<keyword id="KW-0812">Transmembrane</keyword>
<keyword id="KW-1133">Transmembrane helix</keyword>
<keyword id="KW-0862">Zinc</keyword>
<proteinExistence type="evidence at transcript level"/>
<dbReference type="EC" id="3.1.3.1"/>
<dbReference type="EMBL" id="X98402">
    <property type="protein sequence ID" value="CAA67052.1"/>
    <property type="status" value="ALT_FRAME"/>
    <property type="molecule type" value="mRNA"/>
</dbReference>
<dbReference type="EMBL" id="AE014297">
    <property type="protein sequence ID" value="AAF57106.1"/>
    <property type="molecule type" value="Genomic_DNA"/>
</dbReference>
<dbReference type="EMBL" id="AE014297">
    <property type="protein sequence ID" value="AAN14265.1"/>
    <property type="molecule type" value="Genomic_DNA"/>
</dbReference>
<dbReference type="EMBL" id="AY075544">
    <property type="protein sequence ID" value="AAL68351.1"/>
    <property type="molecule type" value="mRNA"/>
</dbReference>
<dbReference type="EMBL" id="BT023911">
    <property type="protein sequence ID" value="ABA81845.1"/>
    <property type="molecule type" value="mRNA"/>
</dbReference>
<dbReference type="EMBL" id="BT057987">
    <property type="protein sequence ID" value="ACM16697.1"/>
    <property type="molecule type" value="mRNA"/>
</dbReference>
<dbReference type="RefSeq" id="NP_524601.2">
    <molecule id="Q24238-1"/>
    <property type="nucleotide sequence ID" value="NM_079862.3"/>
</dbReference>
<dbReference type="RefSeq" id="NP_733413.1">
    <molecule id="Q24238-2"/>
    <property type="nucleotide sequence ID" value="NM_170534.2"/>
</dbReference>
<dbReference type="SMR" id="Q24238"/>
<dbReference type="BioGRID" id="68521">
    <property type="interactions" value="1"/>
</dbReference>
<dbReference type="FunCoup" id="Q24238">
    <property type="interactions" value="164"/>
</dbReference>
<dbReference type="IntAct" id="Q24238">
    <property type="interactions" value="2"/>
</dbReference>
<dbReference type="STRING" id="7227.FBpp0085095"/>
<dbReference type="GlyCosmos" id="Q24238">
    <property type="glycosylation" value="5 sites, No reported glycans"/>
</dbReference>
<dbReference type="GlyGen" id="Q24238">
    <property type="glycosylation" value="5 sites"/>
</dbReference>
<dbReference type="PaxDb" id="7227-FBpp0085095"/>
<dbReference type="DNASU" id="43671"/>
<dbReference type="EnsemblMetazoa" id="FBtr0085733">
    <molecule id="Q24238-1"/>
    <property type="protein sequence ID" value="FBpp0085095"/>
    <property type="gene ID" value="FBgn0016123"/>
</dbReference>
<dbReference type="EnsemblMetazoa" id="FBtr0085734">
    <molecule id="Q24238-2"/>
    <property type="protein sequence ID" value="FBpp0085096"/>
    <property type="gene ID" value="FBgn0016123"/>
</dbReference>
<dbReference type="GeneID" id="43671"/>
<dbReference type="KEGG" id="dme:Dmel_CG1462"/>
<dbReference type="AGR" id="FB:FBgn0016123"/>
<dbReference type="CTD" id="43671"/>
<dbReference type="FlyBase" id="FBgn0016123">
    <property type="gene designation" value="Alp4"/>
</dbReference>
<dbReference type="VEuPathDB" id="VectorBase:FBgn0016123"/>
<dbReference type="eggNOG" id="KOG4126">
    <property type="taxonomic scope" value="Eukaryota"/>
</dbReference>
<dbReference type="GeneTree" id="ENSGT00950000183063"/>
<dbReference type="InParanoid" id="Q24238"/>
<dbReference type="OMA" id="EDAEFWH"/>
<dbReference type="OrthoDB" id="5818554at2759"/>
<dbReference type="PhylomeDB" id="Q24238"/>
<dbReference type="Reactome" id="R-DME-1483166">
    <property type="pathway name" value="Synthesis of PA"/>
</dbReference>
<dbReference type="Reactome" id="R-DME-6811438">
    <property type="pathway name" value="Intra-Golgi traffic"/>
</dbReference>
<dbReference type="Reactome" id="R-DME-8935690">
    <property type="pathway name" value="Digestion"/>
</dbReference>
<dbReference type="BioGRID-ORCS" id="43671">
    <property type="hits" value="0 hits in 3 CRISPR screens"/>
</dbReference>
<dbReference type="GenomeRNAi" id="43671"/>
<dbReference type="PRO" id="PR:Q24238"/>
<dbReference type="Proteomes" id="UP000000803">
    <property type="component" value="Chromosome 3R"/>
</dbReference>
<dbReference type="Bgee" id="FBgn0016123">
    <property type="expression patterns" value="Expressed in oviduct (Drosophila) and 78 other cell types or tissues"/>
</dbReference>
<dbReference type="GO" id="GO:0009986">
    <property type="term" value="C:cell surface"/>
    <property type="evidence" value="ECO:0000250"/>
    <property type="project" value="FlyBase"/>
</dbReference>
<dbReference type="GO" id="GO:0005576">
    <property type="term" value="C:extracellular region"/>
    <property type="evidence" value="ECO:0000255"/>
    <property type="project" value="FlyBase"/>
</dbReference>
<dbReference type="GO" id="GO:0005615">
    <property type="term" value="C:extracellular space"/>
    <property type="evidence" value="ECO:0000255"/>
    <property type="project" value="FlyBase"/>
</dbReference>
<dbReference type="GO" id="GO:0005886">
    <property type="term" value="C:plasma membrane"/>
    <property type="evidence" value="ECO:0007669"/>
    <property type="project" value="UniProtKB-SubCell"/>
</dbReference>
<dbReference type="GO" id="GO:0098552">
    <property type="term" value="C:side of membrane"/>
    <property type="evidence" value="ECO:0007669"/>
    <property type="project" value="UniProtKB-KW"/>
</dbReference>
<dbReference type="GO" id="GO:0004035">
    <property type="term" value="F:alkaline phosphatase activity"/>
    <property type="evidence" value="ECO:0000250"/>
    <property type="project" value="FlyBase"/>
</dbReference>
<dbReference type="GO" id="GO:0046872">
    <property type="term" value="F:metal ion binding"/>
    <property type="evidence" value="ECO:0007669"/>
    <property type="project" value="UniProtKB-KW"/>
</dbReference>
<dbReference type="GO" id="GO:0042045">
    <property type="term" value="P:epithelial fluid transport"/>
    <property type="evidence" value="ECO:0000315"/>
    <property type="project" value="UniProtKB"/>
</dbReference>
<dbReference type="GO" id="GO:0007399">
    <property type="term" value="P:nervous system development"/>
    <property type="evidence" value="ECO:0000270"/>
    <property type="project" value="UniProtKB"/>
</dbReference>
<dbReference type="GO" id="GO:0019953">
    <property type="term" value="P:sexual reproduction"/>
    <property type="evidence" value="ECO:0000270"/>
    <property type="project" value="FlyBase"/>
</dbReference>
<dbReference type="CDD" id="cd16012">
    <property type="entry name" value="ALP"/>
    <property type="match status" value="1"/>
</dbReference>
<dbReference type="FunFam" id="3.40.720.10:FF:000008">
    <property type="entry name" value="Alkaline phosphatase"/>
    <property type="match status" value="1"/>
</dbReference>
<dbReference type="Gene3D" id="3.40.720.10">
    <property type="entry name" value="Alkaline Phosphatase, subunit A"/>
    <property type="match status" value="1"/>
</dbReference>
<dbReference type="InterPro" id="IPR001952">
    <property type="entry name" value="Alkaline_phosphatase"/>
</dbReference>
<dbReference type="InterPro" id="IPR018299">
    <property type="entry name" value="Alkaline_phosphatase_AS"/>
</dbReference>
<dbReference type="InterPro" id="IPR017850">
    <property type="entry name" value="Alkaline_phosphatase_core_sf"/>
</dbReference>
<dbReference type="PANTHER" id="PTHR11596">
    <property type="entry name" value="ALKALINE PHOSPHATASE"/>
    <property type="match status" value="1"/>
</dbReference>
<dbReference type="PANTHER" id="PTHR11596:SF83">
    <property type="entry name" value="ALKALINE PHOSPHATASE 4"/>
    <property type="match status" value="1"/>
</dbReference>
<dbReference type="Pfam" id="PF00245">
    <property type="entry name" value="Alk_phosphatase"/>
    <property type="match status" value="1"/>
</dbReference>
<dbReference type="PRINTS" id="PR00113">
    <property type="entry name" value="ALKPHPHTASE"/>
</dbReference>
<dbReference type="SMART" id="SM00098">
    <property type="entry name" value="alkPPc"/>
    <property type="match status" value="1"/>
</dbReference>
<dbReference type="SUPFAM" id="SSF53649">
    <property type="entry name" value="Alkaline phosphatase-like"/>
    <property type="match status" value="1"/>
</dbReference>
<dbReference type="PROSITE" id="PS00123">
    <property type="entry name" value="ALKALINE_PHOSPHATASE"/>
    <property type="match status" value="1"/>
</dbReference>
<accession>Q24238</accession>
<accession>B9EQR2</accession>
<accession>Q3KN28</accession>
<accession>Q8IMH0</accession>
<accession>Q8SXW6</accession>
<accession>Q9VA19</accession>
<comment type="function">
    <text evidence="6">Important role in neural and renal epithelial function.</text>
</comment>
<comment type="catalytic activity">
    <reaction evidence="4">
        <text>a phosphate monoester + H2O = an alcohol + phosphate</text>
        <dbReference type="Rhea" id="RHEA:15017"/>
        <dbReference type="ChEBI" id="CHEBI:15377"/>
        <dbReference type="ChEBI" id="CHEBI:30879"/>
        <dbReference type="ChEBI" id="CHEBI:43474"/>
        <dbReference type="ChEBI" id="CHEBI:67140"/>
        <dbReference type="EC" id="3.1.3.1"/>
    </reaction>
</comment>
<comment type="cofactor">
    <cofactor evidence="1">
        <name>Mg(2+)</name>
        <dbReference type="ChEBI" id="CHEBI:18420"/>
    </cofactor>
    <text evidence="1">Binds 1 Mg(2+) ion.</text>
</comment>
<comment type="cofactor">
    <cofactor evidence="1">
        <name>Zn(2+)</name>
        <dbReference type="ChEBI" id="CHEBI:29105"/>
    </cofactor>
    <text evidence="1">Binds 2 Zn(2+) ions.</text>
</comment>
<comment type="subunit">
    <text evidence="2">Homodimer.</text>
</comment>
<comment type="subcellular location">
    <subcellularLocation>
        <location evidence="1">Cell membrane</location>
        <topology evidence="1">Lipid-anchor</topology>
        <topology evidence="1">GPI-anchor</topology>
    </subcellularLocation>
</comment>
<comment type="alternative products">
    <event type="alternative splicing"/>
    <isoform>
        <id>Q24238-1</id>
        <name evidence="8">A</name>
        <sequence type="displayed"/>
    </isoform>
    <isoform>
        <id>Q24238-2</id>
        <name evidence="8">B</name>
        <sequence type="described" ref="VSP_007002"/>
    </isoform>
</comment>
<comment type="tissue specificity">
    <text evidence="6">Ellipsoid body ring neurons in the adult brain and in the lower Malpighian tubule and ureter.</text>
</comment>
<comment type="developmental stage">
    <text evidence="6">Highest abundance during larval stage (prior to the secretion of pupal cuticle) and adult stage.</text>
</comment>
<comment type="similarity">
    <text evidence="10">Belongs to the alkaline phosphatase family.</text>
</comment>
<comment type="sequence caution" evidence="10">
    <conflict type="frameshift">
        <sequence resource="EMBL-CDS" id="CAA67052"/>
    </conflict>
</comment>
<evidence type="ECO:0000250" key="1"/>
<evidence type="ECO:0000250" key="2">
    <source>
        <dbReference type="UniProtKB" id="P05187"/>
    </source>
</evidence>
<evidence type="ECO:0000255" key="3"/>
<evidence type="ECO:0000255" key="4">
    <source>
        <dbReference type="PROSITE-ProRule" id="PRU10042"/>
    </source>
</evidence>
<evidence type="ECO:0000256" key="5">
    <source>
        <dbReference type="SAM" id="MobiDB-lite"/>
    </source>
</evidence>
<evidence type="ECO:0000269" key="6">
    <source>
    </source>
</evidence>
<evidence type="ECO:0000303" key="7">
    <source>
    </source>
</evidence>
<evidence type="ECO:0000303" key="8">
    <source>
    </source>
</evidence>
<evidence type="ECO:0000303" key="9">
    <source ref="5"/>
</evidence>
<evidence type="ECO:0000305" key="10"/>
<evidence type="ECO:0000312" key="11">
    <source>
        <dbReference type="EMBL" id="AAN14265.1"/>
    </source>
</evidence>
<evidence type="ECO:0000312" key="12">
    <source>
        <dbReference type="FlyBase" id="FBgn0016123"/>
    </source>
</evidence>
<sequence>MHCLVILGFLLGSLVAFSWAGVTTQPPPLIRTLSAGGDIGPQFDVGKTKEPEDAEFWHNVGLRQLEKTIKQAQRVKEDSYQKKARNIIIFIGDGMGISTISAGRIYKGQYLKHGYGEEETLVFDDFPNTGMAKTYNVDKQVPDSAGTATAIFSGSKTHYGAIGMDATRSKKNGQQGRVQSVMEWAQKEGKRTGVVTTTRITHATPAATYAHIYDRDWECDTEVPAESVGFHVDIARQLVENAPGNRFNVILGGGMSPMGILNASEVKTTIFEGPTETICTRGDNRNLPAEWLAHHANDTVPPALVHNRKDLLNVNVKKVDHLMGLFRNNHITYSIAREAGEPSLQEMTETALGILERGDESNGFVLLVEGGRIDQGHHMNYARAALHELYEFDLAIQAAVNNTDPDETLILVTADHSHAVTFNGYALRGADILGTANSHEKNDPMFYETISYANGPGYWDHLANDSRPQNSSNMWMPLKHFTAEERAAPTYRHLATVPRKDETHGGEDVAVFAYGPGSSLIRGVFEQNYLAYVMSYAGCLGPAKDFDDSCEDHKDGQKDRPLDKPNPKRNGATVVGASLIPILTAATAAILRGRGL</sequence>
<gene>
    <name evidence="12" type="primary">Alp4</name>
    <name evidence="7" type="synonym">aph-4</name>
    <name evidence="12" type="ORF">CG1462</name>
</gene>
<name>APH4_DROME</name>
<feature type="signal peptide" evidence="3">
    <location>
        <begin position="1"/>
        <end position="20"/>
    </location>
</feature>
<feature type="chain" id="PRO_0000024049" description="Alkaline phosphatase 4">
    <location>
        <begin position="21"/>
        <end position="570"/>
    </location>
</feature>
<feature type="propeptide" id="PRO_0000024050" description="Removed in mature form">
    <location>
        <begin position="571"/>
        <end position="596"/>
    </location>
</feature>
<feature type="transmembrane region" description="Helical" evidence="3">
    <location>
        <begin position="571"/>
        <end position="591"/>
    </location>
</feature>
<feature type="region of interest" description="Disordered" evidence="5">
    <location>
        <begin position="548"/>
        <end position="570"/>
    </location>
</feature>
<feature type="compositionally biased region" description="Basic and acidic residues" evidence="5">
    <location>
        <begin position="548"/>
        <end position="566"/>
    </location>
</feature>
<feature type="active site" description="Phosphoserine intermediate" evidence="4">
    <location>
        <position position="144"/>
    </location>
</feature>
<feature type="binding site" evidence="1">
    <location>
        <position position="93"/>
    </location>
    <ligand>
        <name>Mg(2+)</name>
        <dbReference type="ChEBI" id="CHEBI:18420"/>
    </ligand>
</feature>
<feature type="binding site" evidence="1">
    <location>
        <position position="93"/>
    </location>
    <ligand>
        <name>Zn(2+)</name>
        <dbReference type="ChEBI" id="CHEBI:29105"/>
        <label>2</label>
    </ligand>
</feature>
<feature type="binding site" evidence="1">
    <location>
        <position position="202"/>
    </location>
    <ligand>
        <name>Mg(2+)</name>
        <dbReference type="ChEBI" id="CHEBI:18420"/>
    </ligand>
</feature>
<feature type="binding site" evidence="1">
    <location>
        <position position="204"/>
    </location>
    <ligand>
        <name>Mg(2+)</name>
        <dbReference type="ChEBI" id="CHEBI:18420"/>
    </ligand>
</feature>
<feature type="binding site" evidence="1">
    <location>
        <position position="369"/>
    </location>
    <ligand>
        <name>Mg(2+)</name>
        <dbReference type="ChEBI" id="CHEBI:18420"/>
    </ligand>
</feature>
<feature type="binding site" evidence="1">
    <location>
        <position position="374"/>
    </location>
    <ligand>
        <name>Zn(2+)</name>
        <dbReference type="ChEBI" id="CHEBI:29105"/>
        <label>1</label>
    </ligand>
</feature>
<feature type="binding site" evidence="1">
    <location>
        <position position="378"/>
    </location>
    <ligand>
        <name>Zn(2+)</name>
        <dbReference type="ChEBI" id="CHEBI:29105"/>
        <label>1</label>
    </ligand>
</feature>
<feature type="binding site" evidence="1">
    <location>
        <position position="415"/>
    </location>
    <ligand>
        <name>Zn(2+)</name>
        <dbReference type="ChEBI" id="CHEBI:29105"/>
        <label>2</label>
    </ligand>
</feature>
<feature type="binding site" evidence="1">
    <location>
        <position position="416"/>
    </location>
    <ligand>
        <name>Zn(2+)</name>
        <dbReference type="ChEBI" id="CHEBI:29105"/>
        <label>2</label>
    </ligand>
</feature>
<feature type="binding site" evidence="1">
    <location>
        <position position="504"/>
    </location>
    <ligand>
        <name>Zn(2+)</name>
        <dbReference type="ChEBI" id="CHEBI:29105"/>
        <label>1</label>
    </ligand>
</feature>
<feature type="lipid moiety-binding region" description="GPI-anchor amidated asparagine" evidence="3">
    <location>
        <position position="570"/>
    </location>
</feature>
<feature type="glycosylation site" description="N-linked (GlcNAc...) asparagine" evidence="3">
    <location>
        <position position="262"/>
    </location>
</feature>
<feature type="glycosylation site" description="N-linked (GlcNAc...) asparagine" evidence="3">
    <location>
        <position position="297"/>
    </location>
</feature>
<feature type="glycosylation site" description="N-linked (GlcNAc...) asparagine" evidence="3">
    <location>
        <position position="401"/>
    </location>
</feature>
<feature type="glycosylation site" description="N-linked (GlcNAc...) asparagine" evidence="3">
    <location>
        <position position="464"/>
    </location>
</feature>
<feature type="glycosylation site" description="N-linked (GlcNAc...) asparagine" evidence="3">
    <location>
        <position position="470"/>
    </location>
</feature>
<feature type="disulfide bond" evidence="1">
    <location>
        <begin position="539"/>
        <end position="550"/>
    </location>
</feature>
<feature type="splice variant" id="VSP_007002" description="In isoform B." evidence="8 9">
    <location>
        <begin position="1"/>
        <end position="94"/>
    </location>
</feature>
<feature type="sequence conflict" description="In Ref. 4; AAL68351." evidence="10" ref="4">
    <original>I</original>
    <variation>N</variation>
    <location>
        <position position="200"/>
    </location>
</feature>
<feature type="sequence conflict" description="In Ref. 5; ABA81845." evidence="10" ref="5">
    <original>T</original>
    <variation>S</variation>
    <location>
        <position position="280"/>
    </location>
</feature>
<feature type="sequence conflict" description="In Ref. 1; CAA67052." evidence="10" ref="1">
    <original>G</original>
    <variation>D</variation>
    <location>
        <position position="358"/>
    </location>
</feature>
<feature type="sequence conflict" description="In Ref. 1; CAA67052." evidence="10" ref="1">
    <original>Q</original>
    <variation>H</variation>
    <location>
        <position position="375"/>
    </location>
</feature>
<feature type="sequence conflict" description="In Ref. 1; CAA67052." evidence="10" ref="1">
    <original>AT</original>
    <variation>EP</variation>
    <location>
        <begin position="495"/>
        <end position="496"/>
    </location>
</feature>
<feature type="sequence conflict" description="In Ref. 1; CAA67052." evidence="10" ref="1">
    <original>N</original>
    <variation>S</variation>
    <location>
        <position position="570"/>
    </location>
</feature>
<feature type="sequence conflict" description="In Ref. 1; CAA67052." evidence="10" ref="1">
    <original>T</original>
    <variation>S</variation>
    <location>
        <position position="573"/>
    </location>
</feature>
<feature type="sequence conflict" description="In Ref. 1; CAA67052 and 5; ABA81845." evidence="10" ref="1 5">
    <original>GR</original>
    <variation>CH</variation>
    <location>
        <begin position="593"/>
        <end position="594"/>
    </location>
</feature>
<protein>
    <recommendedName>
        <fullName evidence="7">Alkaline phosphatase 4</fullName>
        <ecNumber>3.1.3.1</ecNumber>
    </recommendedName>
</protein>
<reference evidence="10" key="1">
    <citation type="journal article" date="2000" name="Genetics">
        <title>A novel Drosophila alkaline phosphatase specific to the ellipsoid body of the adult brain and the lower Malpighian (renal) tubule.</title>
        <authorList>
            <person name="Yang M.Y."/>
            <person name="Wang Z."/>
            <person name="MacPherson M."/>
            <person name="Dow J.A.T."/>
            <person name="Kaiser K."/>
        </authorList>
    </citation>
    <scope>NUCLEOTIDE SEQUENCE [MRNA] (ISOFORM A)</scope>
    <scope>FUNCTION</scope>
    <scope>TISSUE SPECIFICITY</scope>
    <scope>DEVELOPMENTAL STAGE</scope>
    <source>
        <tissue>Head</tissue>
    </source>
</reference>
<reference evidence="10" key="2">
    <citation type="journal article" date="2000" name="Science">
        <title>The genome sequence of Drosophila melanogaster.</title>
        <authorList>
            <person name="Adams M.D."/>
            <person name="Celniker S.E."/>
            <person name="Holt R.A."/>
            <person name="Evans C.A."/>
            <person name="Gocayne J.D."/>
            <person name="Amanatides P.G."/>
            <person name="Scherer S.E."/>
            <person name="Li P.W."/>
            <person name="Hoskins R.A."/>
            <person name="Galle R.F."/>
            <person name="George R.A."/>
            <person name="Lewis S.E."/>
            <person name="Richards S."/>
            <person name="Ashburner M."/>
            <person name="Henderson S.N."/>
            <person name="Sutton G.G."/>
            <person name="Wortman J.R."/>
            <person name="Yandell M.D."/>
            <person name="Zhang Q."/>
            <person name="Chen L.X."/>
            <person name="Brandon R.C."/>
            <person name="Rogers Y.-H.C."/>
            <person name="Blazej R.G."/>
            <person name="Champe M."/>
            <person name="Pfeiffer B.D."/>
            <person name="Wan K.H."/>
            <person name="Doyle C."/>
            <person name="Baxter E.G."/>
            <person name="Helt G."/>
            <person name="Nelson C.R."/>
            <person name="Miklos G.L.G."/>
            <person name="Abril J.F."/>
            <person name="Agbayani A."/>
            <person name="An H.-J."/>
            <person name="Andrews-Pfannkoch C."/>
            <person name="Baldwin D."/>
            <person name="Ballew R.M."/>
            <person name="Basu A."/>
            <person name="Baxendale J."/>
            <person name="Bayraktaroglu L."/>
            <person name="Beasley E.M."/>
            <person name="Beeson K.Y."/>
            <person name="Benos P.V."/>
            <person name="Berman B.P."/>
            <person name="Bhandari D."/>
            <person name="Bolshakov S."/>
            <person name="Borkova D."/>
            <person name="Botchan M.R."/>
            <person name="Bouck J."/>
            <person name="Brokstein P."/>
            <person name="Brottier P."/>
            <person name="Burtis K.C."/>
            <person name="Busam D.A."/>
            <person name="Butler H."/>
            <person name="Cadieu E."/>
            <person name="Center A."/>
            <person name="Chandra I."/>
            <person name="Cherry J.M."/>
            <person name="Cawley S."/>
            <person name="Dahlke C."/>
            <person name="Davenport L.B."/>
            <person name="Davies P."/>
            <person name="de Pablos B."/>
            <person name="Delcher A."/>
            <person name="Deng Z."/>
            <person name="Mays A.D."/>
            <person name="Dew I."/>
            <person name="Dietz S.M."/>
            <person name="Dodson K."/>
            <person name="Doup L.E."/>
            <person name="Downes M."/>
            <person name="Dugan-Rocha S."/>
            <person name="Dunkov B.C."/>
            <person name="Dunn P."/>
            <person name="Durbin K.J."/>
            <person name="Evangelista C.C."/>
            <person name="Ferraz C."/>
            <person name="Ferriera S."/>
            <person name="Fleischmann W."/>
            <person name="Fosler C."/>
            <person name="Gabrielian A.E."/>
            <person name="Garg N.S."/>
            <person name="Gelbart W.M."/>
            <person name="Glasser K."/>
            <person name="Glodek A."/>
            <person name="Gong F."/>
            <person name="Gorrell J.H."/>
            <person name="Gu Z."/>
            <person name="Guan P."/>
            <person name="Harris M."/>
            <person name="Harris N.L."/>
            <person name="Harvey D.A."/>
            <person name="Heiman T.J."/>
            <person name="Hernandez J.R."/>
            <person name="Houck J."/>
            <person name="Hostin D."/>
            <person name="Houston K.A."/>
            <person name="Howland T.J."/>
            <person name="Wei M.-H."/>
            <person name="Ibegwam C."/>
            <person name="Jalali M."/>
            <person name="Kalush F."/>
            <person name="Karpen G.H."/>
            <person name="Ke Z."/>
            <person name="Kennison J.A."/>
            <person name="Ketchum K.A."/>
            <person name="Kimmel B.E."/>
            <person name="Kodira C.D."/>
            <person name="Kraft C.L."/>
            <person name="Kravitz S."/>
            <person name="Kulp D."/>
            <person name="Lai Z."/>
            <person name="Lasko P."/>
            <person name="Lei Y."/>
            <person name="Levitsky A.A."/>
            <person name="Li J.H."/>
            <person name="Li Z."/>
            <person name="Liang Y."/>
            <person name="Lin X."/>
            <person name="Liu X."/>
            <person name="Mattei B."/>
            <person name="McIntosh T.C."/>
            <person name="McLeod M.P."/>
            <person name="McPherson D."/>
            <person name="Merkulov G."/>
            <person name="Milshina N.V."/>
            <person name="Mobarry C."/>
            <person name="Morris J."/>
            <person name="Moshrefi A."/>
            <person name="Mount S.M."/>
            <person name="Moy M."/>
            <person name="Murphy B."/>
            <person name="Murphy L."/>
            <person name="Muzny D.M."/>
            <person name="Nelson D.L."/>
            <person name="Nelson D.R."/>
            <person name="Nelson K.A."/>
            <person name="Nixon K."/>
            <person name="Nusskern D.R."/>
            <person name="Pacleb J.M."/>
            <person name="Palazzolo M."/>
            <person name="Pittman G.S."/>
            <person name="Pan S."/>
            <person name="Pollard J."/>
            <person name="Puri V."/>
            <person name="Reese M.G."/>
            <person name="Reinert K."/>
            <person name="Remington K."/>
            <person name="Saunders R.D.C."/>
            <person name="Scheeler F."/>
            <person name="Shen H."/>
            <person name="Shue B.C."/>
            <person name="Siden-Kiamos I."/>
            <person name="Simpson M."/>
            <person name="Skupski M.P."/>
            <person name="Smith T.J."/>
            <person name="Spier E."/>
            <person name="Spradling A.C."/>
            <person name="Stapleton M."/>
            <person name="Strong R."/>
            <person name="Sun E."/>
            <person name="Svirskas R."/>
            <person name="Tector C."/>
            <person name="Turner R."/>
            <person name="Venter E."/>
            <person name="Wang A.H."/>
            <person name="Wang X."/>
            <person name="Wang Z.-Y."/>
            <person name="Wassarman D.A."/>
            <person name="Weinstock G.M."/>
            <person name="Weissenbach J."/>
            <person name="Williams S.M."/>
            <person name="Woodage T."/>
            <person name="Worley K.C."/>
            <person name="Wu D."/>
            <person name="Yang S."/>
            <person name="Yao Q.A."/>
            <person name="Ye J."/>
            <person name="Yeh R.-F."/>
            <person name="Zaveri J.S."/>
            <person name="Zhan M."/>
            <person name="Zhang G."/>
            <person name="Zhao Q."/>
            <person name="Zheng L."/>
            <person name="Zheng X.H."/>
            <person name="Zhong F.N."/>
            <person name="Zhong W."/>
            <person name="Zhou X."/>
            <person name="Zhu S.C."/>
            <person name="Zhu X."/>
            <person name="Smith H.O."/>
            <person name="Gibbs R.A."/>
            <person name="Myers E.W."/>
            <person name="Rubin G.M."/>
            <person name="Venter J.C."/>
        </authorList>
    </citation>
    <scope>NUCLEOTIDE SEQUENCE [LARGE SCALE GENOMIC DNA]</scope>
    <source>
        <strain>Berkeley</strain>
    </source>
</reference>
<reference evidence="10" key="3">
    <citation type="journal article" date="2002" name="Genome Biol.">
        <title>Annotation of the Drosophila melanogaster euchromatic genome: a systematic review.</title>
        <authorList>
            <person name="Misra S."/>
            <person name="Crosby M.A."/>
            <person name="Mungall C.J."/>
            <person name="Matthews B.B."/>
            <person name="Campbell K.S."/>
            <person name="Hradecky P."/>
            <person name="Huang Y."/>
            <person name="Kaminker J.S."/>
            <person name="Millburn G.H."/>
            <person name="Prochnik S.E."/>
            <person name="Smith C.D."/>
            <person name="Tupy J.L."/>
            <person name="Whitfield E.J."/>
            <person name="Bayraktaroglu L."/>
            <person name="Berman B.P."/>
            <person name="Bettencourt B.R."/>
            <person name="Celniker S.E."/>
            <person name="de Grey A.D.N.J."/>
            <person name="Drysdale R.A."/>
            <person name="Harris N.L."/>
            <person name="Richter J."/>
            <person name="Russo S."/>
            <person name="Schroeder A.J."/>
            <person name="Shu S.Q."/>
            <person name="Stapleton M."/>
            <person name="Yamada C."/>
            <person name="Ashburner M."/>
            <person name="Gelbart W.M."/>
            <person name="Rubin G.M."/>
            <person name="Lewis S.E."/>
        </authorList>
    </citation>
    <scope>GENOME REANNOTATION</scope>
    <scope>ALTERNATIVE SPLICING</scope>
    <source>
        <strain>Berkeley</strain>
    </source>
</reference>
<reference key="4">
    <citation type="journal article" date="2002" name="Genome Biol.">
        <title>A Drosophila full-length cDNA resource.</title>
        <authorList>
            <person name="Stapleton M."/>
            <person name="Carlson J.W."/>
            <person name="Brokstein P."/>
            <person name="Yu C."/>
            <person name="Champe M."/>
            <person name="George R.A."/>
            <person name="Guarin H."/>
            <person name="Kronmiller B."/>
            <person name="Pacleb J.M."/>
            <person name="Park S."/>
            <person name="Wan K.H."/>
            <person name="Rubin G.M."/>
            <person name="Celniker S.E."/>
        </authorList>
    </citation>
    <scope>NUCLEOTIDE SEQUENCE [LARGE SCALE MRNA] (ISOFORM A)</scope>
    <source>
        <strain>Berkeley</strain>
        <tissue>Head</tissue>
    </source>
</reference>
<reference evidence="10" key="5">
    <citation type="submission" date="2009-01" db="EMBL/GenBank/DDBJ databases">
        <authorList>
            <person name="Stapleton M."/>
            <person name="Carlson J.W."/>
            <person name="Booth B."/>
            <person name="Chavez C."/>
            <person name="Frise E."/>
            <person name="George R.A."/>
            <person name="Pacleb J.M."/>
            <person name="Park S."/>
            <person name="Wan K.H."/>
            <person name="Yu C."/>
            <person name="Celniker S.E."/>
        </authorList>
    </citation>
    <scope>NUCLEOTIDE SEQUENCE [LARGE SCALE MRNA] (ISOFORMS A AND B)</scope>
    <source>
        <strain>Berkeley</strain>
        <tissue>Testis</tissue>
    </source>
</reference>
<organism evidence="11">
    <name type="scientific">Drosophila melanogaster</name>
    <name type="common">Fruit fly</name>
    <dbReference type="NCBI Taxonomy" id="7227"/>
    <lineage>
        <taxon>Eukaryota</taxon>
        <taxon>Metazoa</taxon>
        <taxon>Ecdysozoa</taxon>
        <taxon>Arthropoda</taxon>
        <taxon>Hexapoda</taxon>
        <taxon>Insecta</taxon>
        <taxon>Pterygota</taxon>
        <taxon>Neoptera</taxon>
        <taxon>Endopterygota</taxon>
        <taxon>Diptera</taxon>
        <taxon>Brachycera</taxon>
        <taxon>Muscomorpha</taxon>
        <taxon>Ephydroidea</taxon>
        <taxon>Drosophilidae</taxon>
        <taxon>Drosophila</taxon>
        <taxon>Sophophora</taxon>
    </lineage>
</organism>